<evidence type="ECO:0000255" key="1">
    <source>
        <dbReference type="HAMAP-Rule" id="MF_03061"/>
    </source>
</evidence>
<evidence type="ECO:0000305" key="2"/>
<comment type="function">
    <text evidence="1">Mitochondrial GTPase that catalyzes the GTP-dependent ribosomal translocation step during translation elongation. During this step, the ribosome changes from the pre-translocational (PRE) to the post-translocational (POST) state as the newly formed A-site-bound peptidyl-tRNA and P-site-bound deacylated tRNA move to the P and E sites, respectively. Catalyzes the coordinated movement of the two tRNA molecules, the mRNA and conformational changes in the ribosome.</text>
</comment>
<comment type="pathway">
    <text evidence="1">Protein biosynthesis; polypeptide chain elongation.</text>
</comment>
<comment type="subcellular location">
    <subcellularLocation>
        <location evidence="1">Mitochondrion</location>
    </subcellularLocation>
</comment>
<comment type="similarity">
    <text evidence="2">Belongs to the TRAFAC class translation factor GTPase superfamily. Classic translation factor GTPase family. EF-G/EF-2 subfamily.</text>
</comment>
<sequence length="799" mass="89149">MRCPSLARLPHRAVSGLTRTPVRFQSQAFLTARCASTAALRSATPVHQSVLNRRYQQTRNASGTAAAVLEAAAQTPDSLSQEAIIENLDPVEAERLSRVRNIGIAAHIDSGKTTCTERVLFYTGRIKAIHEVRGRDSVGAKMDSMDLEREKGITIQSAATFCDWVKKDEDGKEQKYHMNLIDTPGHIDFTIEVERALRVLDGAVMILCAVSGVQSQTITVDRQMRRYNVPRISFVNKMDRMGANPFKSVDQINTKLKLPAAAVQVPIGAEDEFEGVVDLVRMKAIYNQGSNGENIVVKDEIPEKVRELAEERRRMLIETLADVDDDMAEIFLNEEEPTEKQIKDAIRRATIGLKFTPVFMGSALANKSVQPMLDGVIDYLPNPSEVQNTALDKKRNEAQVKLVPYNALPLVCLAFKLEESSFGQLTYIRVYQGTLRKGSYVFNARTDKKVRIPRIVRMHSNEMEDVSEIGAGEICAVFGVECASGDSFTDGQLGYTMSSMFVPEPVISLSIKPKHSKDYANFSKAMARFQREDPTFRVSFDPESEQTLISGMGELHLDIYVERMRREYRVDCETGPPQVAYRETISQRVEFDHLLKKQSGGPGDYARVVGWLEPTGKLEENQFEEQIVGGSISEKFIFACEKGFHLSCEKGPLIGHKVLGTKMVINDGATHMTDSSEMAFKNATQQAFRKAFQEGNPAVLEPMMKTVVTAPAEFQGDVIGLLNKRGATINDSEVGVDEFTVYADCSLNGMFGFSSHLRAATQGKGEYTMEFSHYEKAPPQEQRELVKKYLQAQADRHKK</sequence>
<gene>
    <name type="primary">mef1</name>
    <name type="ORF">AN3832</name>
</gene>
<dbReference type="EMBL" id="AACD01000062">
    <property type="protein sequence ID" value="EAA59097.1"/>
    <property type="molecule type" value="Genomic_DNA"/>
</dbReference>
<dbReference type="EMBL" id="BN001302">
    <property type="protein sequence ID" value="CBF75283.1"/>
    <property type="molecule type" value="Genomic_DNA"/>
</dbReference>
<dbReference type="RefSeq" id="XP_661436.1">
    <property type="nucleotide sequence ID" value="XM_656344.1"/>
</dbReference>
<dbReference type="SMR" id="Q5B6J8"/>
<dbReference type="FunCoup" id="Q5B6J8">
    <property type="interactions" value="653"/>
</dbReference>
<dbReference type="STRING" id="227321.Q5B6J8"/>
<dbReference type="EnsemblFungi" id="CBF75283">
    <property type="protein sequence ID" value="CBF75283"/>
    <property type="gene ID" value="ANIA_03832"/>
</dbReference>
<dbReference type="KEGG" id="ani:ANIA_03832"/>
<dbReference type="VEuPathDB" id="FungiDB:AN3832"/>
<dbReference type="eggNOG" id="KOG0465">
    <property type="taxonomic scope" value="Eukaryota"/>
</dbReference>
<dbReference type="HOGENOM" id="CLU_002794_4_0_1"/>
<dbReference type="InParanoid" id="Q5B6J8"/>
<dbReference type="OMA" id="GQFAKVQ"/>
<dbReference type="OrthoDB" id="198619at2759"/>
<dbReference type="UniPathway" id="UPA00345"/>
<dbReference type="Proteomes" id="UP000000560">
    <property type="component" value="Chromosome II"/>
</dbReference>
<dbReference type="GO" id="GO:0005739">
    <property type="term" value="C:mitochondrion"/>
    <property type="evidence" value="ECO:0000318"/>
    <property type="project" value="GO_Central"/>
</dbReference>
<dbReference type="GO" id="GO:0005525">
    <property type="term" value="F:GTP binding"/>
    <property type="evidence" value="ECO:0007669"/>
    <property type="project" value="UniProtKB-UniRule"/>
</dbReference>
<dbReference type="GO" id="GO:0003924">
    <property type="term" value="F:GTPase activity"/>
    <property type="evidence" value="ECO:0000318"/>
    <property type="project" value="GO_Central"/>
</dbReference>
<dbReference type="GO" id="GO:0003746">
    <property type="term" value="F:translation elongation factor activity"/>
    <property type="evidence" value="ECO:0000318"/>
    <property type="project" value="GO_Central"/>
</dbReference>
<dbReference type="GO" id="GO:0070125">
    <property type="term" value="P:mitochondrial translational elongation"/>
    <property type="evidence" value="ECO:0000318"/>
    <property type="project" value="GO_Central"/>
</dbReference>
<dbReference type="CDD" id="cd01886">
    <property type="entry name" value="EF-G"/>
    <property type="match status" value="1"/>
</dbReference>
<dbReference type="CDD" id="cd16262">
    <property type="entry name" value="EFG_III"/>
    <property type="match status" value="1"/>
</dbReference>
<dbReference type="CDD" id="cd01434">
    <property type="entry name" value="EFG_mtEFG1_IV"/>
    <property type="match status" value="1"/>
</dbReference>
<dbReference type="CDD" id="cd04091">
    <property type="entry name" value="mtEFG1_II_like"/>
    <property type="match status" value="1"/>
</dbReference>
<dbReference type="FunFam" id="3.30.230.10:FF:000003">
    <property type="entry name" value="Elongation factor G"/>
    <property type="match status" value="1"/>
</dbReference>
<dbReference type="FunFam" id="3.30.70.870:FF:000001">
    <property type="entry name" value="Elongation factor G"/>
    <property type="match status" value="1"/>
</dbReference>
<dbReference type="FunFam" id="2.40.30.10:FF:000022">
    <property type="entry name" value="Elongation factor G, mitochondrial"/>
    <property type="match status" value="1"/>
</dbReference>
<dbReference type="FunFam" id="3.30.70.240:FF:000015">
    <property type="entry name" value="Elongation factor G, mitochondrial"/>
    <property type="match status" value="1"/>
</dbReference>
<dbReference type="FunFam" id="3.40.50.300:FF:000558">
    <property type="entry name" value="Elongation factor G, mitochondrial"/>
    <property type="match status" value="1"/>
</dbReference>
<dbReference type="Gene3D" id="3.30.230.10">
    <property type="match status" value="1"/>
</dbReference>
<dbReference type="Gene3D" id="3.30.70.240">
    <property type="match status" value="1"/>
</dbReference>
<dbReference type="Gene3D" id="3.30.70.870">
    <property type="entry name" value="Elongation Factor G (Translational Gtpase), domain 3"/>
    <property type="match status" value="1"/>
</dbReference>
<dbReference type="Gene3D" id="3.40.50.300">
    <property type="entry name" value="P-loop containing nucleotide triphosphate hydrolases"/>
    <property type="match status" value="1"/>
</dbReference>
<dbReference type="Gene3D" id="2.40.30.10">
    <property type="entry name" value="Translation factors"/>
    <property type="match status" value="1"/>
</dbReference>
<dbReference type="HAMAP" id="MF_00054_B">
    <property type="entry name" value="EF_G_EF_2_B"/>
    <property type="match status" value="1"/>
</dbReference>
<dbReference type="InterPro" id="IPR041095">
    <property type="entry name" value="EFG_II"/>
</dbReference>
<dbReference type="InterPro" id="IPR009022">
    <property type="entry name" value="EFG_III"/>
</dbReference>
<dbReference type="InterPro" id="IPR035647">
    <property type="entry name" value="EFG_III/V"/>
</dbReference>
<dbReference type="InterPro" id="IPR047872">
    <property type="entry name" value="EFG_IV"/>
</dbReference>
<dbReference type="InterPro" id="IPR000640">
    <property type="entry name" value="EFG_V-like"/>
</dbReference>
<dbReference type="InterPro" id="IPR004161">
    <property type="entry name" value="EFTu-like_2"/>
</dbReference>
<dbReference type="InterPro" id="IPR031157">
    <property type="entry name" value="G_TR_CS"/>
</dbReference>
<dbReference type="InterPro" id="IPR027417">
    <property type="entry name" value="P-loop_NTPase"/>
</dbReference>
<dbReference type="InterPro" id="IPR020568">
    <property type="entry name" value="Ribosomal_Su5_D2-typ_SF"/>
</dbReference>
<dbReference type="InterPro" id="IPR014721">
    <property type="entry name" value="Ribsml_uS5_D2-typ_fold_subgr"/>
</dbReference>
<dbReference type="InterPro" id="IPR005225">
    <property type="entry name" value="Small_GTP-bd"/>
</dbReference>
<dbReference type="InterPro" id="IPR000795">
    <property type="entry name" value="T_Tr_GTP-bd_dom"/>
</dbReference>
<dbReference type="InterPro" id="IPR009000">
    <property type="entry name" value="Transl_B-barrel_sf"/>
</dbReference>
<dbReference type="InterPro" id="IPR004540">
    <property type="entry name" value="Transl_elong_EFG/EF2"/>
</dbReference>
<dbReference type="InterPro" id="IPR005517">
    <property type="entry name" value="Transl_elong_EFG/EF2_IV"/>
</dbReference>
<dbReference type="NCBIfam" id="TIGR00484">
    <property type="entry name" value="EF-G"/>
    <property type="match status" value="1"/>
</dbReference>
<dbReference type="NCBIfam" id="NF009381">
    <property type="entry name" value="PRK12740.1-5"/>
    <property type="match status" value="1"/>
</dbReference>
<dbReference type="NCBIfam" id="TIGR00231">
    <property type="entry name" value="small_GTP"/>
    <property type="match status" value="1"/>
</dbReference>
<dbReference type="PANTHER" id="PTHR43636">
    <property type="entry name" value="ELONGATION FACTOR G, MITOCHONDRIAL"/>
    <property type="match status" value="1"/>
</dbReference>
<dbReference type="PANTHER" id="PTHR43636:SF2">
    <property type="entry name" value="ELONGATION FACTOR G, MITOCHONDRIAL"/>
    <property type="match status" value="1"/>
</dbReference>
<dbReference type="Pfam" id="PF00679">
    <property type="entry name" value="EFG_C"/>
    <property type="match status" value="1"/>
</dbReference>
<dbReference type="Pfam" id="PF14492">
    <property type="entry name" value="EFG_III"/>
    <property type="match status" value="1"/>
</dbReference>
<dbReference type="Pfam" id="PF03764">
    <property type="entry name" value="EFG_IV"/>
    <property type="match status" value="1"/>
</dbReference>
<dbReference type="Pfam" id="PF00009">
    <property type="entry name" value="GTP_EFTU"/>
    <property type="match status" value="1"/>
</dbReference>
<dbReference type="Pfam" id="PF03144">
    <property type="entry name" value="GTP_EFTU_D2"/>
    <property type="match status" value="1"/>
</dbReference>
<dbReference type="PRINTS" id="PR00315">
    <property type="entry name" value="ELONGATNFCT"/>
</dbReference>
<dbReference type="SMART" id="SM00838">
    <property type="entry name" value="EFG_C"/>
    <property type="match status" value="1"/>
</dbReference>
<dbReference type="SMART" id="SM00889">
    <property type="entry name" value="EFG_IV"/>
    <property type="match status" value="1"/>
</dbReference>
<dbReference type="SUPFAM" id="SSF54980">
    <property type="entry name" value="EF-G C-terminal domain-like"/>
    <property type="match status" value="2"/>
</dbReference>
<dbReference type="SUPFAM" id="SSF52540">
    <property type="entry name" value="P-loop containing nucleoside triphosphate hydrolases"/>
    <property type="match status" value="1"/>
</dbReference>
<dbReference type="SUPFAM" id="SSF54211">
    <property type="entry name" value="Ribosomal protein S5 domain 2-like"/>
    <property type="match status" value="1"/>
</dbReference>
<dbReference type="SUPFAM" id="SSF50447">
    <property type="entry name" value="Translation proteins"/>
    <property type="match status" value="1"/>
</dbReference>
<dbReference type="PROSITE" id="PS00301">
    <property type="entry name" value="G_TR_1"/>
    <property type="match status" value="1"/>
</dbReference>
<dbReference type="PROSITE" id="PS51722">
    <property type="entry name" value="G_TR_2"/>
    <property type="match status" value="1"/>
</dbReference>
<proteinExistence type="inferred from homology"/>
<keyword id="KW-0251">Elongation factor</keyword>
<keyword id="KW-0342">GTP-binding</keyword>
<keyword id="KW-0496">Mitochondrion</keyword>
<keyword id="KW-0547">Nucleotide-binding</keyword>
<keyword id="KW-0648">Protein biosynthesis</keyword>
<keyword id="KW-1185">Reference proteome</keyword>
<keyword id="KW-0809">Transit peptide</keyword>
<accession>Q5B6J8</accession>
<accession>C8V6Q4</accession>
<protein>
    <recommendedName>
        <fullName evidence="1">Elongation factor G, mitochondrial</fullName>
        <shortName evidence="1">EF-Gmt</shortName>
    </recommendedName>
    <alternativeName>
        <fullName evidence="1">Elongation factor G 1, mitochondrial</fullName>
        <shortName evidence="1">mEF-G 1</shortName>
    </alternativeName>
    <alternativeName>
        <fullName evidence="1">Elongation factor G1</fullName>
    </alternativeName>
</protein>
<reference key="1">
    <citation type="journal article" date="2005" name="Nature">
        <title>Sequencing of Aspergillus nidulans and comparative analysis with A. fumigatus and A. oryzae.</title>
        <authorList>
            <person name="Galagan J.E."/>
            <person name="Calvo S.E."/>
            <person name="Cuomo C."/>
            <person name="Ma L.-J."/>
            <person name="Wortman J.R."/>
            <person name="Batzoglou S."/>
            <person name="Lee S.-I."/>
            <person name="Bastuerkmen M."/>
            <person name="Spevak C.C."/>
            <person name="Clutterbuck J."/>
            <person name="Kapitonov V."/>
            <person name="Jurka J."/>
            <person name="Scazzocchio C."/>
            <person name="Farman M.L."/>
            <person name="Butler J."/>
            <person name="Purcell S."/>
            <person name="Harris S."/>
            <person name="Braus G.H."/>
            <person name="Draht O."/>
            <person name="Busch S."/>
            <person name="D'Enfert C."/>
            <person name="Bouchier C."/>
            <person name="Goldman G.H."/>
            <person name="Bell-Pedersen D."/>
            <person name="Griffiths-Jones S."/>
            <person name="Doonan J.H."/>
            <person name="Yu J."/>
            <person name="Vienken K."/>
            <person name="Pain A."/>
            <person name="Freitag M."/>
            <person name="Selker E.U."/>
            <person name="Archer D.B."/>
            <person name="Penalva M.A."/>
            <person name="Oakley B.R."/>
            <person name="Momany M."/>
            <person name="Tanaka T."/>
            <person name="Kumagai T."/>
            <person name="Asai K."/>
            <person name="Machida M."/>
            <person name="Nierman W.C."/>
            <person name="Denning D.W."/>
            <person name="Caddick M.X."/>
            <person name="Hynes M."/>
            <person name="Paoletti M."/>
            <person name="Fischer R."/>
            <person name="Miller B.L."/>
            <person name="Dyer P.S."/>
            <person name="Sachs M.S."/>
            <person name="Osmani S.A."/>
            <person name="Birren B.W."/>
        </authorList>
    </citation>
    <scope>NUCLEOTIDE SEQUENCE [LARGE SCALE GENOMIC DNA]</scope>
    <source>
        <strain>FGSC A4 / ATCC 38163 / CBS 112.46 / NRRL 194 / M139</strain>
    </source>
</reference>
<reference key="2">
    <citation type="journal article" date="2009" name="Fungal Genet. Biol.">
        <title>The 2008 update of the Aspergillus nidulans genome annotation: a community effort.</title>
        <authorList>
            <person name="Wortman J.R."/>
            <person name="Gilsenan J.M."/>
            <person name="Joardar V."/>
            <person name="Deegan J."/>
            <person name="Clutterbuck J."/>
            <person name="Andersen M.R."/>
            <person name="Archer D."/>
            <person name="Bencina M."/>
            <person name="Braus G."/>
            <person name="Coutinho P."/>
            <person name="von Dohren H."/>
            <person name="Doonan J."/>
            <person name="Driessen A.J."/>
            <person name="Durek P."/>
            <person name="Espeso E."/>
            <person name="Fekete E."/>
            <person name="Flipphi M."/>
            <person name="Estrada C.G."/>
            <person name="Geysens S."/>
            <person name="Goldman G."/>
            <person name="de Groot P.W."/>
            <person name="Hansen K."/>
            <person name="Harris S.D."/>
            <person name="Heinekamp T."/>
            <person name="Helmstaedt K."/>
            <person name="Henrissat B."/>
            <person name="Hofmann G."/>
            <person name="Homan T."/>
            <person name="Horio T."/>
            <person name="Horiuchi H."/>
            <person name="James S."/>
            <person name="Jones M."/>
            <person name="Karaffa L."/>
            <person name="Karanyi Z."/>
            <person name="Kato M."/>
            <person name="Keller N."/>
            <person name="Kelly D.E."/>
            <person name="Kiel J.A."/>
            <person name="Kim J.M."/>
            <person name="van der Klei I.J."/>
            <person name="Klis F.M."/>
            <person name="Kovalchuk A."/>
            <person name="Krasevec N."/>
            <person name="Kubicek C.P."/>
            <person name="Liu B."/>
            <person name="Maccabe A."/>
            <person name="Meyer V."/>
            <person name="Mirabito P."/>
            <person name="Miskei M."/>
            <person name="Mos M."/>
            <person name="Mullins J."/>
            <person name="Nelson D.R."/>
            <person name="Nielsen J."/>
            <person name="Oakley B.R."/>
            <person name="Osmani S.A."/>
            <person name="Pakula T."/>
            <person name="Paszewski A."/>
            <person name="Paulsen I."/>
            <person name="Pilsyk S."/>
            <person name="Pocsi I."/>
            <person name="Punt P.J."/>
            <person name="Ram A.F."/>
            <person name="Ren Q."/>
            <person name="Robellet X."/>
            <person name="Robson G."/>
            <person name="Seiboth B."/>
            <person name="van Solingen P."/>
            <person name="Specht T."/>
            <person name="Sun J."/>
            <person name="Taheri-Talesh N."/>
            <person name="Takeshita N."/>
            <person name="Ussery D."/>
            <person name="vanKuyk P.A."/>
            <person name="Visser H."/>
            <person name="van de Vondervoort P.J."/>
            <person name="de Vries R.P."/>
            <person name="Walton J."/>
            <person name="Xiang X."/>
            <person name="Xiong Y."/>
            <person name="Zeng A.P."/>
            <person name="Brandt B.W."/>
            <person name="Cornell M.J."/>
            <person name="van den Hondel C.A."/>
            <person name="Visser J."/>
            <person name="Oliver S.G."/>
            <person name="Turner G."/>
        </authorList>
    </citation>
    <scope>GENOME REANNOTATION</scope>
    <source>
        <strain>FGSC A4 / ATCC 38163 / CBS 112.46 / NRRL 194 / M139</strain>
    </source>
</reference>
<organism>
    <name type="scientific">Emericella nidulans (strain FGSC A4 / ATCC 38163 / CBS 112.46 / NRRL 194 / M139)</name>
    <name type="common">Aspergillus nidulans</name>
    <dbReference type="NCBI Taxonomy" id="227321"/>
    <lineage>
        <taxon>Eukaryota</taxon>
        <taxon>Fungi</taxon>
        <taxon>Dikarya</taxon>
        <taxon>Ascomycota</taxon>
        <taxon>Pezizomycotina</taxon>
        <taxon>Eurotiomycetes</taxon>
        <taxon>Eurotiomycetidae</taxon>
        <taxon>Eurotiales</taxon>
        <taxon>Aspergillaceae</taxon>
        <taxon>Aspergillus</taxon>
        <taxon>Aspergillus subgen. Nidulantes</taxon>
    </lineage>
</organism>
<feature type="transit peptide" description="Mitochondrion" evidence="1">
    <location>
        <begin position="1"/>
        <end position="24"/>
    </location>
</feature>
<feature type="chain" id="PRO_0000385572" description="Elongation factor G, mitochondrial">
    <location>
        <begin position="25"/>
        <end position="799"/>
    </location>
</feature>
<feature type="domain" description="tr-type G">
    <location>
        <begin position="97"/>
        <end position="384"/>
    </location>
</feature>
<feature type="binding site" evidence="1">
    <location>
        <begin position="106"/>
        <end position="113"/>
    </location>
    <ligand>
        <name>GTP</name>
        <dbReference type="ChEBI" id="CHEBI:37565"/>
    </ligand>
</feature>
<feature type="binding site" evidence="1">
    <location>
        <begin position="182"/>
        <end position="186"/>
    </location>
    <ligand>
        <name>GTP</name>
        <dbReference type="ChEBI" id="CHEBI:37565"/>
    </ligand>
</feature>
<feature type="binding site" evidence="1">
    <location>
        <begin position="236"/>
        <end position="239"/>
    </location>
    <ligand>
        <name>GTP</name>
        <dbReference type="ChEBI" id="CHEBI:37565"/>
    </ligand>
</feature>
<name>EFGM_EMENI</name>